<keyword id="KW-0028">Amino-acid biosynthesis</keyword>
<keyword id="KW-0963">Cytoplasm</keyword>
<keyword id="KW-0368">Histidine biosynthesis</keyword>
<keyword id="KW-1185">Reference proteome</keyword>
<sequence>MSTWLLPENIADVLPSEARKIEELRRRLLDRFRSYGYEMVMPPLLEYLESLLTSGGNELRLRTFKLVDQVSGRTLGLRADMTPQVARIDAHLLNRQGVTRLCYAGPVLHTRPRGLHASREQLQIGAEIYGHAGLEADQEIQQLMLDALHLTGLKKIRLDLCHAGVLAALFARDAAAAERGEALYEALAGKDVPRLNELTDDLGADTRAALRALPRLYGDASVLDDARRLLPALPEIARALDDLAHLAAQVKDAEVAIDLADLRGYAYHSGAMFAAYVDGVPNAVAHGGRYDHVGQAYGRARPATGFSLDLREIARISPVEARGAAILAPWKQDDALRAAVGALRDAGEVVIQALPGHDHVLDEFACDRALVERDGAWVIEPR</sequence>
<comment type="function">
    <text evidence="1">Required for the first step of histidine biosynthesis. May allow the feedback regulation of ATP phosphoribosyltransferase activity by histidine.</text>
</comment>
<comment type="pathway">
    <text evidence="1">Amino-acid biosynthesis; L-histidine biosynthesis; L-histidine from 5-phospho-alpha-D-ribose 1-diphosphate: step 1/9.</text>
</comment>
<comment type="subunit">
    <text evidence="1">Heteromultimer composed of HisG and HisZ subunits.</text>
</comment>
<comment type="subcellular location">
    <subcellularLocation>
        <location evidence="1">Cytoplasm</location>
    </subcellularLocation>
</comment>
<comment type="miscellaneous">
    <text>This function is generally fulfilled by the C-terminal part of HisG, which is missing in some bacteria such as this one.</text>
</comment>
<comment type="similarity">
    <text evidence="1">Belongs to the class-II aminoacyl-tRNA synthetase family. HisZ subfamily.</text>
</comment>
<feature type="chain" id="PRO_0000242827" description="ATP phosphoribosyltransferase regulatory subunit">
    <location>
        <begin position="1"/>
        <end position="382"/>
    </location>
</feature>
<proteinExistence type="inferred from homology"/>
<evidence type="ECO:0000255" key="1">
    <source>
        <dbReference type="HAMAP-Rule" id="MF_00125"/>
    </source>
</evidence>
<accession>Q63US3</accession>
<organism>
    <name type="scientific">Burkholderia pseudomallei (strain K96243)</name>
    <dbReference type="NCBI Taxonomy" id="272560"/>
    <lineage>
        <taxon>Bacteria</taxon>
        <taxon>Pseudomonadati</taxon>
        <taxon>Pseudomonadota</taxon>
        <taxon>Betaproteobacteria</taxon>
        <taxon>Burkholderiales</taxon>
        <taxon>Burkholderiaceae</taxon>
        <taxon>Burkholderia</taxon>
        <taxon>pseudomallei group</taxon>
    </lineage>
</organism>
<dbReference type="EMBL" id="BX571965">
    <property type="protein sequence ID" value="CAH35524.1"/>
    <property type="molecule type" value="Genomic_DNA"/>
</dbReference>
<dbReference type="RefSeq" id="WP_004192327.1">
    <property type="nucleotide sequence ID" value="NZ_CP009538.1"/>
</dbReference>
<dbReference type="RefSeq" id="YP_108143.1">
    <property type="nucleotide sequence ID" value="NC_006350.1"/>
</dbReference>
<dbReference type="SMR" id="Q63US3"/>
<dbReference type="STRING" id="272560.BPSL1523"/>
<dbReference type="KEGG" id="bps:BPSL1523"/>
<dbReference type="PATRIC" id="fig|272560.51.peg.3561"/>
<dbReference type="eggNOG" id="COG3705">
    <property type="taxonomic scope" value="Bacteria"/>
</dbReference>
<dbReference type="UniPathway" id="UPA00031">
    <property type="reaction ID" value="UER00006"/>
</dbReference>
<dbReference type="Proteomes" id="UP000000605">
    <property type="component" value="Chromosome 1"/>
</dbReference>
<dbReference type="GO" id="GO:0005737">
    <property type="term" value="C:cytoplasm"/>
    <property type="evidence" value="ECO:0007669"/>
    <property type="project" value="UniProtKB-SubCell"/>
</dbReference>
<dbReference type="GO" id="GO:0004821">
    <property type="term" value="F:histidine-tRNA ligase activity"/>
    <property type="evidence" value="ECO:0007669"/>
    <property type="project" value="TreeGrafter"/>
</dbReference>
<dbReference type="GO" id="GO:0006427">
    <property type="term" value="P:histidyl-tRNA aminoacylation"/>
    <property type="evidence" value="ECO:0007669"/>
    <property type="project" value="TreeGrafter"/>
</dbReference>
<dbReference type="GO" id="GO:0000105">
    <property type="term" value="P:L-histidine biosynthetic process"/>
    <property type="evidence" value="ECO:0007669"/>
    <property type="project" value="UniProtKB-UniRule"/>
</dbReference>
<dbReference type="CDD" id="cd00773">
    <property type="entry name" value="HisRS-like_core"/>
    <property type="match status" value="1"/>
</dbReference>
<dbReference type="Gene3D" id="3.30.930.10">
    <property type="entry name" value="Bira Bifunctional Protein, Domain 2"/>
    <property type="match status" value="1"/>
</dbReference>
<dbReference type="HAMAP" id="MF_00125">
    <property type="entry name" value="HisZ"/>
    <property type="match status" value="1"/>
</dbReference>
<dbReference type="InterPro" id="IPR045864">
    <property type="entry name" value="aa-tRNA-synth_II/BPL/LPL"/>
</dbReference>
<dbReference type="InterPro" id="IPR041715">
    <property type="entry name" value="HisRS-like_core"/>
</dbReference>
<dbReference type="InterPro" id="IPR004516">
    <property type="entry name" value="HisRS/HisZ"/>
</dbReference>
<dbReference type="InterPro" id="IPR004517">
    <property type="entry name" value="HisZ"/>
</dbReference>
<dbReference type="NCBIfam" id="TIGR00443">
    <property type="entry name" value="hisZ_biosyn_reg"/>
    <property type="match status" value="1"/>
</dbReference>
<dbReference type="NCBIfam" id="NF008935">
    <property type="entry name" value="PRK12292.1-1"/>
    <property type="match status" value="1"/>
</dbReference>
<dbReference type="NCBIfam" id="NF009086">
    <property type="entry name" value="PRK12421.1"/>
    <property type="match status" value="1"/>
</dbReference>
<dbReference type="PANTHER" id="PTHR43707:SF1">
    <property type="entry name" value="HISTIDINE--TRNA LIGASE, MITOCHONDRIAL-RELATED"/>
    <property type="match status" value="1"/>
</dbReference>
<dbReference type="PANTHER" id="PTHR43707">
    <property type="entry name" value="HISTIDYL-TRNA SYNTHETASE"/>
    <property type="match status" value="1"/>
</dbReference>
<dbReference type="Pfam" id="PF13393">
    <property type="entry name" value="tRNA-synt_His"/>
    <property type="match status" value="1"/>
</dbReference>
<dbReference type="PIRSF" id="PIRSF001549">
    <property type="entry name" value="His-tRNA_synth"/>
    <property type="match status" value="1"/>
</dbReference>
<dbReference type="SUPFAM" id="SSF55681">
    <property type="entry name" value="Class II aaRS and biotin synthetases"/>
    <property type="match status" value="1"/>
</dbReference>
<protein>
    <recommendedName>
        <fullName evidence="1">ATP phosphoribosyltransferase regulatory subunit</fullName>
    </recommendedName>
</protein>
<gene>
    <name evidence="1" type="primary">hisZ</name>
    <name type="ordered locus">BPSL1523</name>
</gene>
<reference key="1">
    <citation type="journal article" date="2004" name="Proc. Natl. Acad. Sci. U.S.A.">
        <title>Genomic plasticity of the causative agent of melioidosis, Burkholderia pseudomallei.</title>
        <authorList>
            <person name="Holden M.T.G."/>
            <person name="Titball R.W."/>
            <person name="Peacock S.J."/>
            <person name="Cerdeno-Tarraga A.-M."/>
            <person name="Atkins T."/>
            <person name="Crossman L.C."/>
            <person name="Pitt T."/>
            <person name="Churcher C."/>
            <person name="Mungall K.L."/>
            <person name="Bentley S.D."/>
            <person name="Sebaihia M."/>
            <person name="Thomson N.R."/>
            <person name="Bason N."/>
            <person name="Beacham I.R."/>
            <person name="Brooks K."/>
            <person name="Brown K.A."/>
            <person name="Brown N.F."/>
            <person name="Challis G.L."/>
            <person name="Cherevach I."/>
            <person name="Chillingworth T."/>
            <person name="Cronin A."/>
            <person name="Crossett B."/>
            <person name="Davis P."/>
            <person name="DeShazer D."/>
            <person name="Feltwell T."/>
            <person name="Fraser A."/>
            <person name="Hance Z."/>
            <person name="Hauser H."/>
            <person name="Holroyd S."/>
            <person name="Jagels K."/>
            <person name="Keith K.E."/>
            <person name="Maddison M."/>
            <person name="Moule S."/>
            <person name="Price C."/>
            <person name="Quail M.A."/>
            <person name="Rabbinowitsch E."/>
            <person name="Rutherford K."/>
            <person name="Sanders M."/>
            <person name="Simmonds M."/>
            <person name="Songsivilai S."/>
            <person name="Stevens K."/>
            <person name="Tumapa S."/>
            <person name="Vesaratchavest M."/>
            <person name="Whitehead S."/>
            <person name="Yeats C."/>
            <person name="Barrell B.G."/>
            <person name="Oyston P.C.F."/>
            <person name="Parkhill J."/>
        </authorList>
    </citation>
    <scope>NUCLEOTIDE SEQUENCE [LARGE SCALE GENOMIC DNA]</scope>
    <source>
        <strain>K96243</strain>
    </source>
</reference>
<name>HISZ_BURPS</name>